<accession>A0B9V5</accession>
<keyword id="KW-1185">Reference proteome</keyword>
<keyword id="KW-0687">Ribonucleoprotein</keyword>
<keyword id="KW-0689">Ribosomal protein</keyword>
<keyword id="KW-0694">RNA-binding</keyword>
<keyword id="KW-0699">rRNA-binding</keyword>
<organism>
    <name type="scientific">Methanothrix thermoacetophila (strain DSM 6194 / JCM 14653 / NBRC 101360 / PT)</name>
    <name type="common">Methanosaeta thermophila</name>
    <dbReference type="NCBI Taxonomy" id="349307"/>
    <lineage>
        <taxon>Archaea</taxon>
        <taxon>Methanobacteriati</taxon>
        <taxon>Methanobacteriota</taxon>
        <taxon>Stenosarchaea group</taxon>
        <taxon>Methanomicrobia</taxon>
        <taxon>Methanotrichales</taxon>
        <taxon>Methanotrichaceae</taxon>
        <taxon>Methanothrix</taxon>
    </lineage>
</organism>
<reference key="1">
    <citation type="submission" date="2006-10" db="EMBL/GenBank/DDBJ databases">
        <title>Complete sequence of Methanosaeta thermophila PT.</title>
        <authorList>
            <consortium name="US DOE Joint Genome Institute"/>
            <person name="Copeland A."/>
            <person name="Lucas S."/>
            <person name="Lapidus A."/>
            <person name="Barry K."/>
            <person name="Detter J.C."/>
            <person name="Glavina del Rio T."/>
            <person name="Hammon N."/>
            <person name="Israni S."/>
            <person name="Pitluck S."/>
            <person name="Chain P."/>
            <person name="Malfatti S."/>
            <person name="Shin M."/>
            <person name="Vergez L."/>
            <person name="Schmutz J."/>
            <person name="Larimer F."/>
            <person name="Land M."/>
            <person name="Hauser L."/>
            <person name="Kyrpides N."/>
            <person name="Kim E."/>
            <person name="Smith K.S."/>
            <person name="Ingram-Smith C."/>
            <person name="Richardson P."/>
        </authorList>
    </citation>
    <scope>NUCLEOTIDE SEQUENCE [LARGE SCALE GENOMIC DNA]</scope>
    <source>
        <strain>DSM 6194 / JCM 14653 / NBRC 101360 / PT</strain>
    </source>
</reference>
<name>RS8_METTP</name>
<dbReference type="EMBL" id="CP000477">
    <property type="protein sequence ID" value="ABK15479.1"/>
    <property type="molecule type" value="Genomic_DNA"/>
</dbReference>
<dbReference type="SMR" id="A0B9V5"/>
<dbReference type="STRING" id="349307.Mthe_1713"/>
<dbReference type="KEGG" id="mtp:Mthe_1713"/>
<dbReference type="HOGENOM" id="CLU_098428_1_1_2"/>
<dbReference type="Proteomes" id="UP000000674">
    <property type="component" value="Chromosome"/>
</dbReference>
<dbReference type="GO" id="GO:1990904">
    <property type="term" value="C:ribonucleoprotein complex"/>
    <property type="evidence" value="ECO:0007669"/>
    <property type="project" value="UniProtKB-KW"/>
</dbReference>
<dbReference type="GO" id="GO:0005840">
    <property type="term" value="C:ribosome"/>
    <property type="evidence" value="ECO:0007669"/>
    <property type="project" value="UniProtKB-KW"/>
</dbReference>
<dbReference type="GO" id="GO:0019843">
    <property type="term" value="F:rRNA binding"/>
    <property type="evidence" value="ECO:0007669"/>
    <property type="project" value="UniProtKB-UniRule"/>
</dbReference>
<dbReference type="GO" id="GO:0003735">
    <property type="term" value="F:structural constituent of ribosome"/>
    <property type="evidence" value="ECO:0007669"/>
    <property type="project" value="InterPro"/>
</dbReference>
<dbReference type="GO" id="GO:0006412">
    <property type="term" value="P:translation"/>
    <property type="evidence" value="ECO:0007669"/>
    <property type="project" value="UniProtKB-UniRule"/>
</dbReference>
<dbReference type="FunFam" id="3.30.1370.30:FF:000001">
    <property type="entry name" value="40S ribosomal protein S15a"/>
    <property type="match status" value="1"/>
</dbReference>
<dbReference type="FunFam" id="3.30.1490.10:FF:000002">
    <property type="entry name" value="40S ribosomal protein S15a"/>
    <property type="match status" value="1"/>
</dbReference>
<dbReference type="Gene3D" id="3.30.1370.30">
    <property type="match status" value="1"/>
</dbReference>
<dbReference type="Gene3D" id="3.30.1490.10">
    <property type="match status" value="1"/>
</dbReference>
<dbReference type="HAMAP" id="MF_01302_A">
    <property type="entry name" value="Ribosomal_uS8_A"/>
    <property type="match status" value="1"/>
</dbReference>
<dbReference type="InterPro" id="IPR000630">
    <property type="entry name" value="Ribosomal_uS8"/>
</dbReference>
<dbReference type="InterPro" id="IPR047863">
    <property type="entry name" value="Ribosomal_uS8_CS"/>
</dbReference>
<dbReference type="InterPro" id="IPR035987">
    <property type="entry name" value="Ribosomal_uS8_sf"/>
</dbReference>
<dbReference type="NCBIfam" id="NF003115">
    <property type="entry name" value="PRK04034.1"/>
    <property type="match status" value="1"/>
</dbReference>
<dbReference type="PANTHER" id="PTHR11758">
    <property type="entry name" value="40S RIBOSOMAL PROTEIN S15A"/>
    <property type="match status" value="1"/>
</dbReference>
<dbReference type="Pfam" id="PF00410">
    <property type="entry name" value="Ribosomal_S8"/>
    <property type="match status" value="1"/>
</dbReference>
<dbReference type="SUPFAM" id="SSF56047">
    <property type="entry name" value="Ribosomal protein S8"/>
    <property type="match status" value="1"/>
</dbReference>
<dbReference type="PROSITE" id="PS00053">
    <property type="entry name" value="RIBOSOMAL_S8"/>
    <property type="match status" value="1"/>
</dbReference>
<gene>
    <name evidence="1" type="primary">rps8</name>
    <name type="ordered locus">Mthe_1713</name>
</gene>
<comment type="function">
    <text evidence="1">One of the primary rRNA binding proteins, it binds directly to 16S rRNA central domain where it helps coordinate assembly of the platform of the 30S subunit.</text>
</comment>
<comment type="subunit">
    <text evidence="1">Part of the 30S ribosomal subunit.</text>
</comment>
<comment type="similarity">
    <text evidence="1">Belongs to the universal ribosomal protein uS8 family.</text>
</comment>
<proteinExistence type="inferred from homology"/>
<evidence type="ECO:0000255" key="1">
    <source>
        <dbReference type="HAMAP-Rule" id="MF_01302"/>
    </source>
</evidence>
<evidence type="ECO:0000305" key="2"/>
<protein>
    <recommendedName>
        <fullName evidence="1">Small ribosomal subunit protein uS8</fullName>
    </recommendedName>
    <alternativeName>
        <fullName evidence="2">30S ribosomal protein S8</fullName>
    </alternativeName>
</protein>
<feature type="chain" id="PRO_0000305766" description="Small ribosomal subunit protein uS8">
    <location>
        <begin position="1"/>
        <end position="129"/>
    </location>
</feature>
<sequence length="129" mass="14265">MLLDPLADAMSTIKNAENVGKPECIIKPASKLIAMTLKVMADLGYIGEFEFIDDGKSGMFKVKLLGRINRCGVIKPRFAIKVAELEKWERRFLPARNFGVLILSTSQGVMPHTDARARGIGGHLLAYVY</sequence>